<dbReference type="EMBL" id="CH916369">
    <property type="protein sequence ID" value="EDV93261.1"/>
    <property type="molecule type" value="Genomic_DNA"/>
</dbReference>
<dbReference type="SMR" id="B4JEY0"/>
<dbReference type="FunCoup" id="B4JEY0">
    <property type="interactions" value="49"/>
</dbReference>
<dbReference type="STRING" id="7222.B4JEY0"/>
<dbReference type="EnsemblMetazoa" id="FBtr0153774">
    <property type="protein sequence ID" value="FBpp0152266"/>
    <property type="gene ID" value="FBgn0125828"/>
</dbReference>
<dbReference type="EnsemblMetazoa" id="XM_001990163.2">
    <property type="protein sequence ID" value="XP_001990199.1"/>
    <property type="gene ID" value="LOC6563035"/>
</dbReference>
<dbReference type="GeneID" id="6563035"/>
<dbReference type="KEGG" id="dgr:6563035"/>
<dbReference type="eggNOG" id="ENOG502RVT8">
    <property type="taxonomic scope" value="Eukaryota"/>
</dbReference>
<dbReference type="HOGENOM" id="CLU_1246541_0_0_1"/>
<dbReference type="InParanoid" id="B4JEY0"/>
<dbReference type="OMA" id="NELMECM"/>
<dbReference type="OrthoDB" id="8006210at2759"/>
<dbReference type="PhylomeDB" id="B4JEY0"/>
<dbReference type="Proteomes" id="UP000001070">
    <property type="component" value="Unassembled WGS sequence"/>
</dbReference>
<dbReference type="GO" id="GO:0031262">
    <property type="term" value="C:Ndc80 complex"/>
    <property type="evidence" value="ECO:0000250"/>
    <property type="project" value="UniProtKB"/>
</dbReference>
<dbReference type="GO" id="GO:0005634">
    <property type="term" value="C:nucleus"/>
    <property type="evidence" value="ECO:0007669"/>
    <property type="project" value="UniProtKB-SubCell"/>
</dbReference>
<dbReference type="GO" id="GO:0051301">
    <property type="term" value="P:cell division"/>
    <property type="evidence" value="ECO:0007669"/>
    <property type="project" value="UniProtKB-KW"/>
</dbReference>
<dbReference type="GO" id="GO:0051311">
    <property type="term" value="P:meiotic metaphase chromosome alignment"/>
    <property type="evidence" value="ECO:0000250"/>
    <property type="project" value="UniProtKB"/>
</dbReference>
<dbReference type="GO" id="GO:0000212">
    <property type="term" value="P:meiotic spindle organization"/>
    <property type="evidence" value="ECO:0000250"/>
    <property type="project" value="UniProtKB"/>
</dbReference>
<dbReference type="GO" id="GO:0007080">
    <property type="term" value="P:mitotic metaphase chromosome alignment"/>
    <property type="evidence" value="ECO:0000250"/>
    <property type="project" value="UniProtKB"/>
</dbReference>
<gene>
    <name evidence="2" type="primary">Spc25</name>
    <name type="ORF">GH18360</name>
</gene>
<evidence type="ECO:0000250" key="1">
    <source>
        <dbReference type="UniProtKB" id="Q9HBM1"/>
    </source>
</evidence>
<evidence type="ECO:0000250" key="2">
    <source>
        <dbReference type="UniProtKB" id="Q9V3V7"/>
    </source>
</evidence>
<evidence type="ECO:0000255" key="3"/>
<evidence type="ECO:0000312" key="4">
    <source>
        <dbReference type="EMBL" id="EDV93261.1"/>
    </source>
</evidence>
<organism>
    <name type="scientific">Drosophila grimshawi</name>
    <name type="common">Hawaiian fruit fly</name>
    <name type="synonym">Idiomyia grimshawi</name>
    <dbReference type="NCBI Taxonomy" id="7222"/>
    <lineage>
        <taxon>Eukaryota</taxon>
        <taxon>Metazoa</taxon>
        <taxon>Ecdysozoa</taxon>
        <taxon>Arthropoda</taxon>
        <taxon>Hexapoda</taxon>
        <taxon>Insecta</taxon>
        <taxon>Pterygota</taxon>
        <taxon>Neoptera</taxon>
        <taxon>Endopterygota</taxon>
        <taxon>Diptera</taxon>
        <taxon>Brachycera</taxon>
        <taxon>Muscomorpha</taxon>
        <taxon>Ephydroidea</taxon>
        <taxon>Drosophilidae</taxon>
        <taxon>Drosophila</taxon>
        <taxon>Hawaiian Drosophila</taxon>
    </lineage>
</organism>
<proteinExistence type="inferred from homology"/>
<comment type="function">
    <text evidence="1 2">Acts as a component of the essential kinetochore-associated Ndc80 complex, which is required for chromosome segregation and spindle checkpoint activity during meiosis and mitosis. Required for kinetochore integrity and the organization of stable microtubule binding sites in the outer plate of the kinetochore. Participates in SAC signaling that responds specifically to disruptions in spindle microtubule dynamics. The NDC80 complex synergistically enhances the affinity of the SKA1 complex for microtubules and may allow the NDC80 complex to track depolymerizing microtubules.</text>
</comment>
<comment type="subunit">
    <text evidence="2">Component of the Ndc80 complex, which is composed of Ndc80, Nuf2 and Spc25.</text>
</comment>
<comment type="subcellular location">
    <subcellularLocation>
        <location evidence="2">Nucleus</location>
    </subcellularLocation>
    <subcellularLocation>
        <location evidence="2">Chromosome</location>
        <location evidence="2">Centromere</location>
        <location evidence="2">Kinetochore</location>
    </subcellularLocation>
</comment>
<comment type="similarity">
    <text evidence="3">Belongs to the SPC25 family.</text>
</comment>
<protein>
    <recommendedName>
        <fullName evidence="2">Kinetochore protein Spc25</fullName>
    </recommendedName>
</protein>
<name>SPC25_DROGR</name>
<sequence length="209" mass="23900">MTEQFDTRRRLMAMFRNEMRMEKLENTIAKKSTKFHTNSAALMTTIDLQQRKFEKLNALITRRCEDINTRTAFTRAVREKLAEERQKNAEMQAQLEKANDERIEQMDCVRTLSDASNTFINPSALPARLKGVTVLREEGRWISLDYDGDDLKGLSTFWAQAHSGSASQKWQQLLSMDKAIMPTLNDKGNVNVSVSSIIEIDLTASPSHK</sequence>
<reference evidence="4" key="1">
    <citation type="journal article" date="2007" name="Nature">
        <title>Evolution of genes and genomes on the Drosophila phylogeny.</title>
        <authorList>
            <consortium name="Drosophila 12 genomes consortium"/>
        </authorList>
    </citation>
    <scope>NUCLEOTIDE SEQUENCE [LARGE SCALE GENOMIC DNA]</scope>
    <source>
        <strain evidence="4">Tucson 15287-2541.00</strain>
    </source>
</reference>
<accession>B4JEY0</accession>
<feature type="chain" id="PRO_0000392417" description="Kinetochore protein Spc25">
    <location>
        <begin position="1"/>
        <end position="209"/>
    </location>
</feature>
<feature type="coiled-coil region" evidence="3">
    <location>
        <begin position="74"/>
        <end position="107"/>
    </location>
</feature>
<keyword id="KW-0131">Cell cycle</keyword>
<keyword id="KW-0132">Cell division</keyword>
<keyword id="KW-0137">Centromere</keyword>
<keyword id="KW-0158">Chromosome</keyword>
<keyword id="KW-0175">Coiled coil</keyword>
<keyword id="KW-0995">Kinetochore</keyword>
<keyword id="KW-0469">Meiosis</keyword>
<keyword id="KW-0498">Mitosis</keyword>
<keyword id="KW-0539">Nucleus</keyword>
<keyword id="KW-1185">Reference proteome</keyword>